<dbReference type="EC" id="5.3.1.16" evidence="1"/>
<dbReference type="EMBL" id="CP000685">
    <property type="protein sequence ID" value="ABQ05894.1"/>
    <property type="molecule type" value="Genomic_DNA"/>
</dbReference>
<dbReference type="RefSeq" id="WP_012024932.1">
    <property type="nucleotide sequence ID" value="NC_009441.1"/>
</dbReference>
<dbReference type="SMR" id="A5FFX7"/>
<dbReference type="STRING" id="376686.Fjoh_2873"/>
<dbReference type="KEGG" id="fjo:Fjoh_2873"/>
<dbReference type="eggNOG" id="COG0106">
    <property type="taxonomic scope" value="Bacteria"/>
</dbReference>
<dbReference type="HOGENOM" id="CLU_048577_1_2_10"/>
<dbReference type="OrthoDB" id="9807749at2"/>
<dbReference type="UniPathway" id="UPA00031">
    <property type="reaction ID" value="UER00009"/>
</dbReference>
<dbReference type="Proteomes" id="UP000006694">
    <property type="component" value="Chromosome"/>
</dbReference>
<dbReference type="GO" id="GO:0005737">
    <property type="term" value="C:cytoplasm"/>
    <property type="evidence" value="ECO:0007669"/>
    <property type="project" value="UniProtKB-SubCell"/>
</dbReference>
<dbReference type="GO" id="GO:0003949">
    <property type="term" value="F:1-(5-phosphoribosyl)-5-[(5-phosphoribosylamino)methylideneamino]imidazole-4-carboxamide isomerase activity"/>
    <property type="evidence" value="ECO:0007669"/>
    <property type="project" value="UniProtKB-UniRule"/>
</dbReference>
<dbReference type="GO" id="GO:0000105">
    <property type="term" value="P:L-histidine biosynthetic process"/>
    <property type="evidence" value="ECO:0007669"/>
    <property type="project" value="UniProtKB-UniRule"/>
</dbReference>
<dbReference type="GO" id="GO:0000162">
    <property type="term" value="P:L-tryptophan biosynthetic process"/>
    <property type="evidence" value="ECO:0007669"/>
    <property type="project" value="TreeGrafter"/>
</dbReference>
<dbReference type="CDD" id="cd04732">
    <property type="entry name" value="HisA"/>
    <property type="match status" value="1"/>
</dbReference>
<dbReference type="FunFam" id="3.20.20.70:FF:000009">
    <property type="entry name" value="1-(5-phosphoribosyl)-5-[(5-phosphoribosylamino)methylideneamino] imidazole-4-carboxamide isomerase"/>
    <property type="match status" value="1"/>
</dbReference>
<dbReference type="Gene3D" id="3.20.20.70">
    <property type="entry name" value="Aldolase class I"/>
    <property type="match status" value="1"/>
</dbReference>
<dbReference type="HAMAP" id="MF_01014">
    <property type="entry name" value="HisA"/>
    <property type="match status" value="1"/>
</dbReference>
<dbReference type="InterPro" id="IPR013785">
    <property type="entry name" value="Aldolase_TIM"/>
</dbReference>
<dbReference type="InterPro" id="IPR006062">
    <property type="entry name" value="His_biosynth"/>
</dbReference>
<dbReference type="InterPro" id="IPR006063">
    <property type="entry name" value="HisA_bact_arch"/>
</dbReference>
<dbReference type="InterPro" id="IPR044524">
    <property type="entry name" value="Isoase_HisA-like"/>
</dbReference>
<dbReference type="InterPro" id="IPR023016">
    <property type="entry name" value="Isoase_HisA-like_bact"/>
</dbReference>
<dbReference type="InterPro" id="IPR011060">
    <property type="entry name" value="RibuloseP-bd_barrel"/>
</dbReference>
<dbReference type="NCBIfam" id="TIGR00007">
    <property type="entry name" value="1-(5-phosphoribosyl)-5-[(5-phosphoribosylamino)methylideneamino]imidazole-4-carboxamide isomerase"/>
    <property type="match status" value="1"/>
</dbReference>
<dbReference type="PANTHER" id="PTHR43090">
    <property type="entry name" value="1-(5-PHOSPHORIBOSYL)-5-[(5-PHOSPHORIBOSYLAMINO)METHYLIDENEAMINO] IMIDAZOLE-4-CARBOXAMIDE ISOMERASE"/>
    <property type="match status" value="1"/>
</dbReference>
<dbReference type="PANTHER" id="PTHR43090:SF2">
    <property type="entry name" value="1-(5-PHOSPHORIBOSYL)-5-[(5-PHOSPHORIBOSYLAMINO)METHYLIDENEAMINO] IMIDAZOLE-4-CARBOXAMIDE ISOMERASE"/>
    <property type="match status" value="1"/>
</dbReference>
<dbReference type="Pfam" id="PF00977">
    <property type="entry name" value="His_biosynth"/>
    <property type="match status" value="1"/>
</dbReference>
<dbReference type="SUPFAM" id="SSF51366">
    <property type="entry name" value="Ribulose-phoshate binding barrel"/>
    <property type="match status" value="1"/>
</dbReference>
<sequence>MRIIPAIDIIEGKCVRLSKGDYDTKIIYNENPLEVAKSFEAYGIEYLHLVDLDGAKSSKIVNYKILEQIATQTSLKIDFGGGLKSDDDLRIAFESGANQITGGSIAVKNRTIFEKWISEYGSEKIILGADAKDEKIAVSGWLEESNEDLVPFIQDYQNKGIQYVICTDIAKDGMLQGPSFDLYSKILAEAKGVKLIASGGISTFDELPKLAELGCEGTIIGKAIYEGRITLKQLENYIIG</sequence>
<name>HIS4_FLAJ1</name>
<proteinExistence type="inferred from homology"/>
<protein>
    <recommendedName>
        <fullName evidence="1">1-(5-phosphoribosyl)-5-[(5-phosphoribosylamino)methylideneamino] imidazole-4-carboxamide isomerase</fullName>
        <ecNumber evidence="1">5.3.1.16</ecNumber>
    </recommendedName>
    <alternativeName>
        <fullName evidence="1">Phosphoribosylformimino-5-aminoimidazole carboxamide ribotide isomerase</fullName>
    </alternativeName>
</protein>
<gene>
    <name evidence="1" type="primary">hisA</name>
    <name type="ordered locus">Fjoh_2873</name>
</gene>
<keyword id="KW-0028">Amino-acid biosynthesis</keyword>
<keyword id="KW-0963">Cytoplasm</keyword>
<keyword id="KW-0368">Histidine biosynthesis</keyword>
<keyword id="KW-0413">Isomerase</keyword>
<accession>A5FFX7</accession>
<reference key="1">
    <citation type="journal article" date="2009" name="Appl. Environ. Microbiol.">
        <title>Novel features of the polysaccharide-digesting gliding bacterium Flavobacterium johnsoniae as revealed by genome sequence analysis.</title>
        <authorList>
            <person name="McBride M.J."/>
            <person name="Xie G."/>
            <person name="Martens E.C."/>
            <person name="Lapidus A."/>
            <person name="Henrissat B."/>
            <person name="Rhodes R.G."/>
            <person name="Goltsman E."/>
            <person name="Wang W."/>
            <person name="Xu J."/>
            <person name="Hunnicutt D.W."/>
            <person name="Staroscik A.M."/>
            <person name="Hoover T.R."/>
            <person name="Cheng Y.Q."/>
            <person name="Stein J.L."/>
        </authorList>
    </citation>
    <scope>NUCLEOTIDE SEQUENCE [LARGE SCALE GENOMIC DNA]</scope>
    <source>
        <strain>ATCC 17061 / DSM 2064 / JCM 8514 / BCRC 14874 / CCUG 350202 / NBRC 14942 / NCIMB 11054 / UW101</strain>
    </source>
</reference>
<feature type="chain" id="PRO_1000084098" description="1-(5-phosphoribosyl)-5-[(5-phosphoribosylamino)methylideneamino] imidazole-4-carboxamide isomerase">
    <location>
        <begin position="1"/>
        <end position="240"/>
    </location>
</feature>
<feature type="active site" description="Proton acceptor" evidence="1">
    <location>
        <position position="8"/>
    </location>
</feature>
<feature type="active site" description="Proton donor" evidence="1">
    <location>
        <position position="130"/>
    </location>
</feature>
<evidence type="ECO:0000255" key="1">
    <source>
        <dbReference type="HAMAP-Rule" id="MF_01014"/>
    </source>
</evidence>
<organism>
    <name type="scientific">Flavobacterium johnsoniae (strain ATCC 17061 / DSM 2064 / JCM 8514 / BCRC 14874 / CCUG 350202 / NBRC 14942 / NCIMB 11054 / UW101)</name>
    <name type="common">Cytophaga johnsonae</name>
    <dbReference type="NCBI Taxonomy" id="376686"/>
    <lineage>
        <taxon>Bacteria</taxon>
        <taxon>Pseudomonadati</taxon>
        <taxon>Bacteroidota</taxon>
        <taxon>Flavobacteriia</taxon>
        <taxon>Flavobacteriales</taxon>
        <taxon>Flavobacteriaceae</taxon>
        <taxon>Flavobacterium</taxon>
    </lineage>
</organism>
<comment type="catalytic activity">
    <reaction evidence="1">
        <text>1-(5-phospho-beta-D-ribosyl)-5-[(5-phospho-beta-D-ribosylamino)methylideneamino]imidazole-4-carboxamide = 5-[(5-phospho-1-deoxy-D-ribulos-1-ylimino)methylamino]-1-(5-phospho-beta-D-ribosyl)imidazole-4-carboxamide</text>
        <dbReference type="Rhea" id="RHEA:15469"/>
        <dbReference type="ChEBI" id="CHEBI:58435"/>
        <dbReference type="ChEBI" id="CHEBI:58525"/>
        <dbReference type="EC" id="5.3.1.16"/>
    </reaction>
</comment>
<comment type="pathway">
    <text evidence="1">Amino-acid biosynthesis; L-histidine biosynthesis; L-histidine from 5-phospho-alpha-D-ribose 1-diphosphate: step 4/9.</text>
</comment>
<comment type="subcellular location">
    <subcellularLocation>
        <location evidence="1">Cytoplasm</location>
    </subcellularLocation>
</comment>
<comment type="similarity">
    <text evidence="1">Belongs to the HisA/HisF family.</text>
</comment>